<keyword id="KW-0028">Amino-acid biosynthesis</keyword>
<keyword id="KW-0198">Cysteine biosynthesis</keyword>
<keyword id="KW-0249">Electron transport</keyword>
<keyword id="KW-0274">FAD</keyword>
<keyword id="KW-0285">Flavoprotein</keyword>
<keyword id="KW-0288">FMN</keyword>
<keyword id="KW-0521">NADP</keyword>
<keyword id="KW-0560">Oxidoreductase</keyword>
<keyword id="KW-1185">Reference proteome</keyword>
<keyword id="KW-0813">Transport</keyword>
<organism>
    <name type="scientific">Salmonella typhimurium (strain LT2 / SGSC1412 / ATCC 700720)</name>
    <dbReference type="NCBI Taxonomy" id="99287"/>
    <lineage>
        <taxon>Bacteria</taxon>
        <taxon>Pseudomonadati</taxon>
        <taxon>Pseudomonadota</taxon>
        <taxon>Gammaproteobacteria</taxon>
        <taxon>Enterobacterales</taxon>
        <taxon>Enterobacteriaceae</taxon>
        <taxon>Salmonella</taxon>
    </lineage>
</organism>
<accession>P38039</accession>
<accession>P14782</accession>
<comment type="function">
    <text evidence="2">Component of the sulfite reductase complex that catalyzes the 6-electron reduction of sulfite to sulfide. This is one of several activities required for the biosynthesis of L-cysteine from sulfate. The flavoprotein component catalyzes the electron flow from NADPH -&gt; FAD -&gt; FMN to the hemoprotein component.</text>
</comment>
<comment type="catalytic activity">
    <reaction evidence="2">
        <text>hydrogen sulfide + 3 NADP(+) + 3 H2O = sulfite + 3 NADPH + 4 H(+)</text>
        <dbReference type="Rhea" id="RHEA:13801"/>
        <dbReference type="ChEBI" id="CHEBI:15377"/>
        <dbReference type="ChEBI" id="CHEBI:15378"/>
        <dbReference type="ChEBI" id="CHEBI:17359"/>
        <dbReference type="ChEBI" id="CHEBI:29919"/>
        <dbReference type="ChEBI" id="CHEBI:57783"/>
        <dbReference type="ChEBI" id="CHEBI:58349"/>
        <dbReference type="EC" id="1.8.1.2"/>
    </reaction>
</comment>
<comment type="cofactor">
    <cofactor evidence="2">
        <name>FAD</name>
        <dbReference type="ChEBI" id="CHEBI:57692"/>
    </cofactor>
    <text evidence="2">Binds 1 FAD per subunit.</text>
</comment>
<comment type="cofactor">
    <cofactor evidence="2">
        <name>FMN</name>
        <dbReference type="ChEBI" id="CHEBI:58210"/>
    </cofactor>
    <text evidence="2">Binds 1 FMN per subunit.</text>
</comment>
<comment type="pathway">
    <text evidence="2">Sulfur metabolism; hydrogen sulfide biosynthesis; hydrogen sulfide from sulfite (NADPH route): step 1/1.</text>
</comment>
<comment type="subunit">
    <text evidence="2">Alpha(8)-beta(8). The alpha component is a flavoprotein, the beta component is a hemoprotein.</text>
</comment>
<comment type="similarity">
    <text evidence="2">Belongs to the NADPH-dependent sulphite reductase flavoprotein subunit CysJ family.</text>
</comment>
<comment type="similarity">
    <text evidence="2">In the N-terminal section; belongs to the flavodoxin family.</text>
</comment>
<comment type="similarity">
    <text evidence="2">In the C-terminal section; belongs to the flavoprotein pyridine nucleotide cytochrome reductase family.</text>
</comment>
<name>CYSJ_SALTY</name>
<feature type="initiator methionine" description="Removed" evidence="1">
    <location>
        <position position="1"/>
    </location>
</feature>
<feature type="chain" id="PRO_0000199935" description="Sulfite reductase [NADPH] flavoprotein alpha-component">
    <location>
        <begin position="2"/>
        <end position="599"/>
    </location>
</feature>
<feature type="domain" description="Flavodoxin-like" evidence="2">
    <location>
        <begin position="64"/>
        <end position="202"/>
    </location>
</feature>
<feature type="domain" description="FAD-binding FR-type" evidence="2">
    <location>
        <begin position="234"/>
        <end position="448"/>
    </location>
</feature>
<feature type="binding site" evidence="2">
    <location>
        <begin position="70"/>
        <end position="75"/>
    </location>
    <ligand>
        <name>FMN</name>
        <dbReference type="ChEBI" id="CHEBI:58210"/>
    </ligand>
</feature>
<feature type="binding site" evidence="2">
    <location>
        <begin position="117"/>
        <end position="120"/>
    </location>
    <ligand>
        <name>FMN</name>
        <dbReference type="ChEBI" id="CHEBI:58210"/>
    </ligand>
</feature>
<feature type="binding site" evidence="2">
    <location>
        <begin position="153"/>
        <end position="162"/>
    </location>
    <ligand>
        <name>FMN</name>
        <dbReference type="ChEBI" id="CHEBI:58210"/>
    </ligand>
</feature>
<feature type="binding site" evidence="2">
    <location>
        <position position="322"/>
    </location>
    <ligand>
        <name>FAD</name>
        <dbReference type="ChEBI" id="CHEBI:57692"/>
    </ligand>
</feature>
<feature type="binding site" evidence="2">
    <location>
        <position position="356"/>
    </location>
    <ligand>
        <name>FAD</name>
        <dbReference type="ChEBI" id="CHEBI:57692"/>
    </ligand>
</feature>
<feature type="binding site" evidence="2">
    <location>
        <begin position="386"/>
        <end position="389"/>
    </location>
    <ligand>
        <name>FAD</name>
        <dbReference type="ChEBI" id="CHEBI:57692"/>
    </ligand>
</feature>
<feature type="binding site" evidence="2">
    <location>
        <begin position="404"/>
        <end position="406"/>
    </location>
    <ligand>
        <name>FAD</name>
        <dbReference type="ChEBI" id="CHEBI:57692"/>
    </ligand>
</feature>
<feature type="binding site" evidence="2">
    <location>
        <position position="410"/>
    </location>
    <ligand>
        <name>FAD</name>
        <dbReference type="ChEBI" id="CHEBI:57692"/>
    </ligand>
</feature>
<feature type="binding site" evidence="2">
    <location>
        <begin position="419"/>
        <end position="422"/>
    </location>
    <ligand>
        <name>FAD</name>
        <dbReference type="ChEBI" id="CHEBI:57692"/>
    </ligand>
</feature>
<feature type="binding site" evidence="2">
    <location>
        <begin position="519"/>
        <end position="520"/>
    </location>
    <ligand>
        <name>NADP(+)</name>
        <dbReference type="ChEBI" id="CHEBI:58349"/>
    </ligand>
</feature>
<feature type="binding site" evidence="2">
    <location>
        <begin position="525"/>
        <end position="529"/>
    </location>
    <ligand>
        <name>NADP(+)</name>
        <dbReference type="ChEBI" id="CHEBI:58349"/>
    </ligand>
</feature>
<feature type="binding site" evidence="2">
    <location>
        <position position="561"/>
    </location>
    <ligand>
        <name>NADP(+)</name>
        <dbReference type="ChEBI" id="CHEBI:58349"/>
    </ligand>
</feature>
<feature type="binding site" evidence="2">
    <location>
        <position position="599"/>
    </location>
    <ligand>
        <name>FAD</name>
        <dbReference type="ChEBI" id="CHEBI:57692"/>
    </ligand>
</feature>
<proteinExistence type="inferred from homology"/>
<dbReference type="EC" id="1.8.1.2" evidence="2"/>
<dbReference type="EMBL" id="M23007">
    <property type="protein sequence ID" value="AAA27046.1"/>
    <property type="molecule type" value="Genomic_DNA"/>
</dbReference>
<dbReference type="EMBL" id="AE006468">
    <property type="protein sequence ID" value="AAL21828.1"/>
    <property type="molecule type" value="Genomic_DNA"/>
</dbReference>
<dbReference type="PIR" id="A34231">
    <property type="entry name" value="A34231"/>
</dbReference>
<dbReference type="RefSeq" id="NP_461869.1">
    <property type="nucleotide sequence ID" value="NC_003197.2"/>
</dbReference>
<dbReference type="RefSeq" id="WP_000210927.1">
    <property type="nucleotide sequence ID" value="NC_003197.2"/>
</dbReference>
<dbReference type="SMR" id="P38039"/>
<dbReference type="STRING" id="99287.STM2948"/>
<dbReference type="PaxDb" id="99287-STM2948"/>
<dbReference type="GeneID" id="1254471"/>
<dbReference type="KEGG" id="stm:STM2948"/>
<dbReference type="PATRIC" id="fig|99287.12.peg.3109"/>
<dbReference type="HOGENOM" id="CLU_001570_17_7_6"/>
<dbReference type="OMA" id="QKRYQRD"/>
<dbReference type="PhylomeDB" id="P38039"/>
<dbReference type="BioCyc" id="SENT99287:STM2948-MONOMER"/>
<dbReference type="UniPathway" id="UPA00140">
    <property type="reaction ID" value="UER00207"/>
</dbReference>
<dbReference type="Proteomes" id="UP000001014">
    <property type="component" value="Chromosome"/>
</dbReference>
<dbReference type="GO" id="GO:0005829">
    <property type="term" value="C:cytosol"/>
    <property type="evidence" value="ECO:0000318"/>
    <property type="project" value="GO_Central"/>
</dbReference>
<dbReference type="GO" id="GO:0050660">
    <property type="term" value="F:flavin adenine dinucleotide binding"/>
    <property type="evidence" value="ECO:0000318"/>
    <property type="project" value="GO_Central"/>
</dbReference>
<dbReference type="GO" id="GO:0010181">
    <property type="term" value="F:FMN binding"/>
    <property type="evidence" value="ECO:0000318"/>
    <property type="project" value="GO_Central"/>
</dbReference>
<dbReference type="GO" id="GO:0016491">
    <property type="term" value="F:oxidoreductase activity"/>
    <property type="evidence" value="ECO:0000318"/>
    <property type="project" value="GO_Central"/>
</dbReference>
<dbReference type="GO" id="GO:0004783">
    <property type="term" value="F:sulfite reductase (NADPH) activity"/>
    <property type="evidence" value="ECO:0007669"/>
    <property type="project" value="UniProtKB-UniRule"/>
</dbReference>
<dbReference type="GO" id="GO:0019344">
    <property type="term" value="P:cysteine biosynthetic process"/>
    <property type="evidence" value="ECO:0007669"/>
    <property type="project" value="UniProtKB-KW"/>
</dbReference>
<dbReference type="GO" id="GO:0070814">
    <property type="term" value="P:hydrogen sulfide biosynthetic process"/>
    <property type="evidence" value="ECO:0007669"/>
    <property type="project" value="UniProtKB-UniRule"/>
</dbReference>
<dbReference type="GO" id="GO:0000103">
    <property type="term" value="P:sulfate assimilation"/>
    <property type="evidence" value="ECO:0007669"/>
    <property type="project" value="UniProtKB-UniRule"/>
</dbReference>
<dbReference type="CDD" id="cd06199">
    <property type="entry name" value="SiR"/>
    <property type="match status" value="1"/>
</dbReference>
<dbReference type="FunFam" id="3.40.50.80:FF:000001">
    <property type="entry name" value="NADPH--cytochrome P450 reductase 1"/>
    <property type="match status" value="1"/>
</dbReference>
<dbReference type="FunFam" id="1.20.990.10:FF:000004">
    <property type="entry name" value="Sulfite reductase [NADPH] flavoprotein alpha-component"/>
    <property type="match status" value="1"/>
</dbReference>
<dbReference type="FunFam" id="3.40.50.360:FF:000018">
    <property type="entry name" value="Sulfite reductase [NADPH] flavoprotein alpha-component"/>
    <property type="match status" value="1"/>
</dbReference>
<dbReference type="Gene3D" id="3.40.50.360">
    <property type="match status" value="1"/>
</dbReference>
<dbReference type="Gene3D" id="1.20.990.10">
    <property type="entry name" value="NADPH-cytochrome p450 Reductase, Chain A, domain 3"/>
    <property type="match status" value="1"/>
</dbReference>
<dbReference type="Gene3D" id="3.40.50.80">
    <property type="entry name" value="Nucleotide-binding domain of ferredoxin-NADP reductase (FNR) module"/>
    <property type="match status" value="1"/>
</dbReference>
<dbReference type="Gene3D" id="2.40.30.10">
    <property type="entry name" value="Translation factors"/>
    <property type="match status" value="1"/>
</dbReference>
<dbReference type="HAMAP" id="MF_01541">
    <property type="entry name" value="CysJ"/>
    <property type="match status" value="1"/>
</dbReference>
<dbReference type="InterPro" id="IPR010199">
    <property type="entry name" value="CysJ"/>
</dbReference>
<dbReference type="InterPro" id="IPR003097">
    <property type="entry name" value="CysJ-like_FAD-binding"/>
</dbReference>
<dbReference type="InterPro" id="IPR029758">
    <property type="entry name" value="CysJ_Proteobact"/>
</dbReference>
<dbReference type="InterPro" id="IPR017927">
    <property type="entry name" value="FAD-bd_FR_type"/>
</dbReference>
<dbReference type="InterPro" id="IPR001094">
    <property type="entry name" value="Flavdoxin-like"/>
</dbReference>
<dbReference type="InterPro" id="IPR008254">
    <property type="entry name" value="Flavodoxin/NO_synth"/>
</dbReference>
<dbReference type="InterPro" id="IPR001709">
    <property type="entry name" value="Flavoprot_Pyr_Nucl_cyt_Rdtase"/>
</dbReference>
<dbReference type="InterPro" id="IPR029039">
    <property type="entry name" value="Flavoprotein-like_sf"/>
</dbReference>
<dbReference type="InterPro" id="IPR039261">
    <property type="entry name" value="FNR_nucleotide-bd"/>
</dbReference>
<dbReference type="InterPro" id="IPR023173">
    <property type="entry name" value="NADPH_Cyt_P450_Rdtase_alpha"/>
</dbReference>
<dbReference type="InterPro" id="IPR001433">
    <property type="entry name" value="OxRdtase_FAD/NAD-bd"/>
</dbReference>
<dbReference type="InterPro" id="IPR017938">
    <property type="entry name" value="Riboflavin_synthase-like_b-brl"/>
</dbReference>
<dbReference type="NCBIfam" id="TIGR01931">
    <property type="entry name" value="cysJ"/>
    <property type="match status" value="1"/>
</dbReference>
<dbReference type="NCBIfam" id="NF008197">
    <property type="entry name" value="PRK10953.1"/>
    <property type="match status" value="1"/>
</dbReference>
<dbReference type="PANTHER" id="PTHR19384:SF128">
    <property type="entry name" value="NADPH OXIDOREDUCTASE A"/>
    <property type="match status" value="1"/>
</dbReference>
<dbReference type="PANTHER" id="PTHR19384">
    <property type="entry name" value="NITRIC OXIDE SYNTHASE-RELATED"/>
    <property type="match status" value="1"/>
</dbReference>
<dbReference type="Pfam" id="PF00667">
    <property type="entry name" value="FAD_binding_1"/>
    <property type="match status" value="1"/>
</dbReference>
<dbReference type="Pfam" id="PF00258">
    <property type="entry name" value="Flavodoxin_1"/>
    <property type="match status" value="1"/>
</dbReference>
<dbReference type="Pfam" id="PF00175">
    <property type="entry name" value="NAD_binding_1"/>
    <property type="match status" value="1"/>
</dbReference>
<dbReference type="PIRSF" id="PIRSF000207">
    <property type="entry name" value="SiR-FP_CysJ"/>
    <property type="match status" value="1"/>
</dbReference>
<dbReference type="PRINTS" id="PR00369">
    <property type="entry name" value="FLAVODOXIN"/>
</dbReference>
<dbReference type="PRINTS" id="PR00371">
    <property type="entry name" value="FPNCR"/>
</dbReference>
<dbReference type="SUPFAM" id="SSF52343">
    <property type="entry name" value="Ferredoxin reductase-like, C-terminal NADP-linked domain"/>
    <property type="match status" value="1"/>
</dbReference>
<dbReference type="SUPFAM" id="SSF52218">
    <property type="entry name" value="Flavoproteins"/>
    <property type="match status" value="1"/>
</dbReference>
<dbReference type="SUPFAM" id="SSF63380">
    <property type="entry name" value="Riboflavin synthase domain-like"/>
    <property type="match status" value="1"/>
</dbReference>
<dbReference type="PROSITE" id="PS51384">
    <property type="entry name" value="FAD_FR"/>
    <property type="match status" value="1"/>
</dbReference>
<dbReference type="PROSITE" id="PS50902">
    <property type="entry name" value="FLAVODOXIN_LIKE"/>
    <property type="match status" value="1"/>
</dbReference>
<protein>
    <recommendedName>
        <fullName evidence="2">Sulfite reductase [NADPH] flavoprotein alpha-component</fullName>
        <shortName evidence="2">SiR-FP</shortName>
        <ecNumber evidence="2">1.8.1.2</ecNumber>
    </recommendedName>
</protein>
<reference key="1">
    <citation type="journal article" date="1989" name="J. Biol. Chem.">
        <title>Characterization of the flavoprotein moieties of NADPH-sulfite reductase from Salmonella typhimurium and Escherichia coli. Physicochemical and catalytic properties, amino acid sequence deduced from DNA sequence of cysJ, and comparison with NADPH-cytochrome P-450 reductase.</title>
        <authorList>
            <person name="Ostrowski J."/>
            <person name="Barber M.J."/>
            <person name="Rueger D.C."/>
            <person name="Miller B.E."/>
            <person name="Siegel L.M."/>
            <person name="Kredich N.M."/>
        </authorList>
    </citation>
    <scope>NUCLEOTIDE SEQUENCE [GENOMIC DNA]</scope>
    <source>
        <strain>LT2</strain>
    </source>
</reference>
<reference key="2">
    <citation type="journal article" date="2001" name="Nature">
        <title>Complete genome sequence of Salmonella enterica serovar Typhimurium LT2.</title>
        <authorList>
            <person name="McClelland M."/>
            <person name="Sanderson K.E."/>
            <person name="Spieth J."/>
            <person name="Clifton S.W."/>
            <person name="Latreille P."/>
            <person name="Courtney L."/>
            <person name="Porwollik S."/>
            <person name="Ali J."/>
            <person name="Dante M."/>
            <person name="Du F."/>
            <person name="Hou S."/>
            <person name="Layman D."/>
            <person name="Leonard S."/>
            <person name="Nguyen C."/>
            <person name="Scott K."/>
            <person name="Holmes A."/>
            <person name="Grewal N."/>
            <person name="Mulvaney E."/>
            <person name="Ryan E."/>
            <person name="Sun H."/>
            <person name="Florea L."/>
            <person name="Miller W."/>
            <person name="Stoneking T."/>
            <person name="Nhan M."/>
            <person name="Waterston R."/>
            <person name="Wilson R.K."/>
        </authorList>
    </citation>
    <scope>NUCLEOTIDE SEQUENCE [LARGE SCALE GENOMIC DNA]</scope>
    <source>
        <strain>LT2 / SGSC1412 / ATCC 700720</strain>
    </source>
</reference>
<reference key="3">
    <citation type="journal article" date="1989" name="J. Biol. Chem.">
        <title>Characterization of the cysJIH regions of Salmonella typhimurium and Escherichia coli B. DNA sequences of cysI and cysH and a model for the siroheme-Fe4S4 active center of sulfite reductase hemoprotein based on amino acid homology with spinach nitrite reductase.</title>
        <authorList>
            <person name="Ostrowski J."/>
            <person name="Wu J.-Y."/>
            <person name="Rueger D.C."/>
            <person name="Miller B.E."/>
            <person name="Siegel L.M."/>
            <person name="Kredich N.M."/>
        </authorList>
    </citation>
    <scope>NUCLEOTIDE SEQUENCE [GENOMIC DNA] OF 594-599</scope>
    <source>
        <strain>LT2</strain>
    </source>
</reference>
<sequence length="599" mass="66484">MTTPAPLTGLLPLNPEQLARLQAATTDLTPEQLAWVSGYFWGVLNPRSGAVAVTPVPERKMPRVTLISASQTGNARRVAEALRDDLLAANLNVTLVNAGDYKFKQIASEKLLVIVTSTQGEGEPPEEAVALHKFLFSKKAPKLENTAFAVFSLGDTSYEFFCQSGKDFDSKLAELGGERLLDRVDADVEYQAAASEWRARVVDVLKSRAPVAAPSQSVATGAVNDIHTSPYTKDAPLIATLSVNQKITGRNSEKDVRHIEIDLGDSGLRYQPGDALGVWYQNDPALVKELVELLWLKGDEPVTVDGKTLPLAEALEWHFELTVNTANIVENYATLTRSESLLPLVGDKAQLQHYAATTPIVDMVRFSPAQLDAQALIDLLRPLTPRLYSIASAQAEVESEVHITVGVVRYDIEGRARAGGASSFLADRVEEEGEVRVFIEHNDNFRLPANPETPVIMIGPGTGIAPFRSFMQQRAAEGVEGKNWLFFGNPHFTEDFLYQVEWQRYVKEGVLSRIDLAWSRDQKEKIYVQDKLREQGAELWRWINDGAHIYVCGDARRMAADVEKALLEVIAEFGGMDLESADEYLSELRVERRYQRDVY</sequence>
<gene>
    <name evidence="2" type="primary">cysJ</name>
    <name type="ordered locus">STM2948</name>
</gene>
<evidence type="ECO:0000250" key="1"/>
<evidence type="ECO:0000255" key="2">
    <source>
        <dbReference type="HAMAP-Rule" id="MF_01541"/>
    </source>
</evidence>